<feature type="chain" id="PRO_0000098046" description="Urease subunit gamma">
    <location>
        <begin position="1"/>
        <end position="100"/>
    </location>
</feature>
<gene>
    <name evidence="1" type="primary">ureA</name>
    <name type="ordered locus">SSP0265</name>
</gene>
<evidence type="ECO:0000255" key="1">
    <source>
        <dbReference type="HAMAP-Rule" id="MF_00739"/>
    </source>
</evidence>
<evidence type="ECO:0000269" key="2">
    <source>
    </source>
</evidence>
<keyword id="KW-0963">Cytoplasm</keyword>
<keyword id="KW-0903">Direct protein sequencing</keyword>
<keyword id="KW-0378">Hydrolase</keyword>
<keyword id="KW-1185">Reference proteome</keyword>
<sequence>MHFTQREQDKLMLVIAADLARRRQQRGLKLNYPEAVAIISFELLEGARDGKTVAELMSYGKQILNEDDVMEGVADMLTEMEIEATFPDGTKLITVHHPIV</sequence>
<comment type="catalytic activity">
    <reaction evidence="1 2">
        <text>urea + 2 H2O + H(+) = hydrogencarbonate + 2 NH4(+)</text>
        <dbReference type="Rhea" id="RHEA:20557"/>
        <dbReference type="ChEBI" id="CHEBI:15377"/>
        <dbReference type="ChEBI" id="CHEBI:15378"/>
        <dbReference type="ChEBI" id="CHEBI:16199"/>
        <dbReference type="ChEBI" id="CHEBI:17544"/>
        <dbReference type="ChEBI" id="CHEBI:28938"/>
        <dbReference type="EC" id="3.5.1.5"/>
    </reaction>
</comment>
<comment type="biophysicochemical properties">
    <kinetics>
        <KM evidence="2">9.5 mM for urea (at 37 degrees Celsius and pH 7.0)</KM>
        <Vmax evidence="2">1.979 mmol/min/mg enzyme</Vmax>
    </kinetics>
    <phDependence>
        <text evidence="2">Optimum pH is 7.0 in phosphate buffer.</text>
    </phDependence>
    <temperatureDependence>
        <text evidence="2">Optimum temperature is 55 degrees Celsius.</text>
    </temperatureDependence>
</comment>
<comment type="pathway">
    <text evidence="1">Nitrogen metabolism; urea degradation; CO(2) and NH(3) from urea (urease route): step 1/1.</text>
</comment>
<comment type="subunit">
    <text evidence="1">Heterotrimer of UreA (gamma), UreB (beta) and UreC (alpha) subunits. Three heterotrimers associate to form the active enzyme.</text>
</comment>
<comment type="subcellular location">
    <subcellularLocation>
        <location evidence="1">Cytoplasm</location>
    </subcellularLocation>
</comment>
<comment type="similarity">
    <text evidence="1">Belongs to the urease gamma subunit family.</text>
</comment>
<name>URE3_STAS1</name>
<protein>
    <recommendedName>
        <fullName evidence="1">Urease subunit gamma</fullName>
        <ecNumber evidence="1">3.5.1.5</ecNumber>
    </recommendedName>
    <alternativeName>
        <fullName evidence="1">Urea amidohydrolase subunit gamma</fullName>
    </alternativeName>
</protein>
<proteinExistence type="evidence at protein level"/>
<organism>
    <name type="scientific">Staphylococcus saprophyticus subsp. saprophyticus (strain ATCC 15305 / DSM 20229 / NCIMB 8711 / NCTC 7292 / S-41)</name>
    <dbReference type="NCBI Taxonomy" id="342451"/>
    <lineage>
        <taxon>Bacteria</taxon>
        <taxon>Bacillati</taxon>
        <taxon>Bacillota</taxon>
        <taxon>Bacilli</taxon>
        <taxon>Bacillales</taxon>
        <taxon>Staphylococcaceae</taxon>
        <taxon>Staphylococcus</taxon>
    </lineage>
</organism>
<reference key="1">
    <citation type="journal article" date="2005" name="Proc. Natl. Acad. Sci. U.S.A.">
        <title>Whole genome sequence of Staphylococcus saprophyticus reveals the pathogenesis of uncomplicated urinary tract infection.</title>
        <authorList>
            <person name="Kuroda M."/>
            <person name="Yamashita A."/>
            <person name="Hirakawa H."/>
            <person name="Kumano M."/>
            <person name="Morikawa K."/>
            <person name="Higashide M."/>
            <person name="Maruyama A."/>
            <person name="Inose Y."/>
            <person name="Matoba K."/>
            <person name="Toh H."/>
            <person name="Kuhara S."/>
            <person name="Hattori M."/>
            <person name="Ohta T."/>
        </authorList>
    </citation>
    <scope>NUCLEOTIDE SEQUENCE [LARGE SCALE GENOMIC DNA]</scope>
    <source>
        <strain>ATCC 15305 / DSM 20229 / NCIMB 8711 / NCTC 7292 / S-41</strain>
    </source>
</reference>
<reference key="2">
    <citation type="journal article" date="1994" name="Arch. Microbiol.">
        <title>Urease from Staphylococcus saprophyticus: purification, characterization and comparison to Staphylococcus xylosus urease.</title>
        <authorList>
            <person name="Schaefer U.K."/>
            <person name="Kaltwasser H."/>
        </authorList>
    </citation>
    <scope>PROTEIN SEQUENCE OF 1-4</scope>
    <scope>CATALYTIC ACTIVITY</scope>
    <scope>BIOPHYSICOCHEMICAL PROPERTIES</scope>
</reference>
<accession>Q4A0J3</accession>
<dbReference type="EC" id="3.5.1.5" evidence="1"/>
<dbReference type="EMBL" id="AP008934">
    <property type="protein sequence ID" value="BAE17410.1"/>
    <property type="molecule type" value="Genomic_DNA"/>
</dbReference>
<dbReference type="RefSeq" id="WP_011302251.1">
    <property type="nucleotide sequence ID" value="NZ_MTGA01000037.1"/>
</dbReference>
<dbReference type="SMR" id="Q4A0J3"/>
<dbReference type="GeneID" id="3616071"/>
<dbReference type="KEGG" id="ssp:SSP0265"/>
<dbReference type="eggNOG" id="COG0831">
    <property type="taxonomic scope" value="Bacteria"/>
</dbReference>
<dbReference type="HOGENOM" id="CLU_145825_1_0_9"/>
<dbReference type="OrthoDB" id="9793527at2"/>
<dbReference type="UniPathway" id="UPA00258">
    <property type="reaction ID" value="UER00370"/>
</dbReference>
<dbReference type="Proteomes" id="UP000006371">
    <property type="component" value="Chromosome"/>
</dbReference>
<dbReference type="GO" id="GO:0005737">
    <property type="term" value="C:cytoplasm"/>
    <property type="evidence" value="ECO:0007669"/>
    <property type="project" value="UniProtKB-SubCell"/>
</dbReference>
<dbReference type="GO" id="GO:0016151">
    <property type="term" value="F:nickel cation binding"/>
    <property type="evidence" value="ECO:0007669"/>
    <property type="project" value="InterPro"/>
</dbReference>
<dbReference type="GO" id="GO:0009039">
    <property type="term" value="F:urease activity"/>
    <property type="evidence" value="ECO:0007669"/>
    <property type="project" value="UniProtKB-UniRule"/>
</dbReference>
<dbReference type="GO" id="GO:0043419">
    <property type="term" value="P:urea catabolic process"/>
    <property type="evidence" value="ECO:0007669"/>
    <property type="project" value="UniProtKB-UniRule"/>
</dbReference>
<dbReference type="CDD" id="cd00390">
    <property type="entry name" value="Urease_gamma"/>
    <property type="match status" value="1"/>
</dbReference>
<dbReference type="Gene3D" id="3.30.280.10">
    <property type="entry name" value="Urease, gamma-like subunit"/>
    <property type="match status" value="1"/>
</dbReference>
<dbReference type="HAMAP" id="MF_00739">
    <property type="entry name" value="Urease_gamma"/>
    <property type="match status" value="1"/>
</dbReference>
<dbReference type="InterPro" id="IPR012010">
    <property type="entry name" value="Urease_gamma"/>
</dbReference>
<dbReference type="InterPro" id="IPR002026">
    <property type="entry name" value="Urease_gamma/gamma-beta_su"/>
</dbReference>
<dbReference type="InterPro" id="IPR036463">
    <property type="entry name" value="Urease_gamma_sf"/>
</dbReference>
<dbReference type="InterPro" id="IPR050069">
    <property type="entry name" value="Urease_subunit"/>
</dbReference>
<dbReference type="NCBIfam" id="NF009712">
    <property type="entry name" value="PRK13241.1"/>
    <property type="match status" value="1"/>
</dbReference>
<dbReference type="NCBIfam" id="TIGR00193">
    <property type="entry name" value="urease_gam"/>
    <property type="match status" value="1"/>
</dbReference>
<dbReference type="PANTHER" id="PTHR33569">
    <property type="entry name" value="UREASE"/>
    <property type="match status" value="1"/>
</dbReference>
<dbReference type="PANTHER" id="PTHR33569:SF1">
    <property type="entry name" value="UREASE"/>
    <property type="match status" value="1"/>
</dbReference>
<dbReference type="Pfam" id="PF00547">
    <property type="entry name" value="Urease_gamma"/>
    <property type="match status" value="1"/>
</dbReference>
<dbReference type="PIRSF" id="PIRSF001223">
    <property type="entry name" value="Urease_gamma"/>
    <property type="match status" value="1"/>
</dbReference>
<dbReference type="SUPFAM" id="SSF54111">
    <property type="entry name" value="Urease, gamma-subunit"/>
    <property type="match status" value="1"/>
</dbReference>